<gene>
    <name type="primary">RPL9</name>
    <name type="ORF">TTHERM_01142730A</name>
</gene>
<sequence length="188" mass="21336">MRHLLTEVNVPIPDKVTITAKQRVVEVKGPLGTIKRAFRYASVDIQKPTADNVKLQIWQASRKERAVLQSIASQIKNMIRGVTEGYKFKMKLAFAHFPIQEAVAKDGSSIEIKHFLGEKRIRRIQALPGVKISRKDEEKNTLTLQGIDLNNVSQTCALIHQSCLVKEKDIRQFLDGIYVSDKRLAMNE</sequence>
<proteinExistence type="evidence at protein level"/>
<protein>
    <recommendedName>
        <fullName evidence="1">Large ribosomal subunit protein uL6</fullName>
    </recommendedName>
    <alternativeName>
        <fullName>60S ribosomal protein L9</fullName>
    </alternativeName>
</protein>
<evidence type="ECO:0000305" key="1"/>
<organism>
    <name type="scientific">Tetrahymena thermophila (strain SB210)</name>
    <dbReference type="NCBI Taxonomy" id="312017"/>
    <lineage>
        <taxon>Eukaryota</taxon>
        <taxon>Sar</taxon>
        <taxon>Alveolata</taxon>
        <taxon>Ciliophora</taxon>
        <taxon>Intramacronucleata</taxon>
        <taxon>Oligohymenophorea</taxon>
        <taxon>Hymenostomatida</taxon>
        <taxon>Tetrahymenina</taxon>
        <taxon>Tetrahymenidae</taxon>
        <taxon>Tetrahymena</taxon>
    </lineage>
</organism>
<dbReference type="EMBL" id="GG662712">
    <property type="protein sequence ID" value="EAR82439.1"/>
    <property type="molecule type" value="Genomic_DNA"/>
</dbReference>
<dbReference type="RefSeq" id="XP_001030102.1">
    <property type="nucleotide sequence ID" value="XM_001030102.3"/>
</dbReference>
<dbReference type="PDB" id="4V8P">
    <property type="method" value="X-ray"/>
    <property type="resolution" value="3.52 A"/>
    <property type="chains" value="BE/CE/EE/GE=1-188"/>
</dbReference>
<dbReference type="PDBsum" id="4V8P"/>
<dbReference type="SMR" id="Q22AX5"/>
<dbReference type="FunCoup" id="Q22AX5">
    <property type="interactions" value="381"/>
</dbReference>
<dbReference type="IntAct" id="Q22AX5">
    <property type="interactions" value="1"/>
</dbReference>
<dbReference type="STRING" id="312017.Q22AX5"/>
<dbReference type="EnsemblProtists" id="EAR82439">
    <property type="protein sequence ID" value="EAR82439"/>
    <property type="gene ID" value="TTHERM_01142730"/>
</dbReference>
<dbReference type="KEGG" id="tet:TTHERM_01142730"/>
<dbReference type="eggNOG" id="KOG3255">
    <property type="taxonomic scope" value="Eukaryota"/>
</dbReference>
<dbReference type="HOGENOM" id="CLU_065464_0_0_1"/>
<dbReference type="InParanoid" id="Q22AX5"/>
<dbReference type="OMA" id="YAHFPMK"/>
<dbReference type="OrthoDB" id="291967at2759"/>
<dbReference type="Proteomes" id="UP000009168">
    <property type="component" value="Unassembled WGS sequence"/>
</dbReference>
<dbReference type="GO" id="GO:0022625">
    <property type="term" value="C:cytosolic large ribosomal subunit"/>
    <property type="evidence" value="ECO:0007669"/>
    <property type="project" value="TreeGrafter"/>
</dbReference>
<dbReference type="GO" id="GO:0019843">
    <property type="term" value="F:rRNA binding"/>
    <property type="evidence" value="ECO:0007669"/>
    <property type="project" value="InterPro"/>
</dbReference>
<dbReference type="GO" id="GO:0003735">
    <property type="term" value="F:structural constituent of ribosome"/>
    <property type="evidence" value="ECO:0007669"/>
    <property type="project" value="InterPro"/>
</dbReference>
<dbReference type="GO" id="GO:0002181">
    <property type="term" value="P:cytoplasmic translation"/>
    <property type="evidence" value="ECO:0007669"/>
    <property type="project" value="TreeGrafter"/>
</dbReference>
<dbReference type="FunFam" id="3.90.930.12:FF:000003">
    <property type="entry name" value="60S ribosomal protein L9"/>
    <property type="match status" value="1"/>
</dbReference>
<dbReference type="FunFam" id="3.90.930.12:FF:000004">
    <property type="entry name" value="60S ribosomal protein L9"/>
    <property type="match status" value="1"/>
</dbReference>
<dbReference type="Gene3D" id="3.90.930.12">
    <property type="entry name" value="Ribosomal protein L6, alpha-beta domain"/>
    <property type="match status" value="2"/>
</dbReference>
<dbReference type="InterPro" id="IPR000702">
    <property type="entry name" value="Ribosomal_uL6-like"/>
</dbReference>
<dbReference type="InterPro" id="IPR036789">
    <property type="entry name" value="Ribosomal_uL6-like_a/b-dom_sf"/>
</dbReference>
<dbReference type="InterPro" id="IPR020040">
    <property type="entry name" value="Ribosomal_uL6_a/b-dom"/>
</dbReference>
<dbReference type="InterPro" id="IPR002359">
    <property type="entry name" value="Ribosomal_uL6_CS2"/>
</dbReference>
<dbReference type="PANTHER" id="PTHR11655:SF16">
    <property type="entry name" value="60S RIBOSOMAL PROTEIN L9"/>
    <property type="match status" value="1"/>
</dbReference>
<dbReference type="PANTHER" id="PTHR11655">
    <property type="entry name" value="60S/50S RIBOSOMAL PROTEIN L6/L9"/>
    <property type="match status" value="1"/>
</dbReference>
<dbReference type="Pfam" id="PF00347">
    <property type="entry name" value="Ribosomal_L6"/>
    <property type="match status" value="2"/>
</dbReference>
<dbReference type="PIRSF" id="PIRSF002162">
    <property type="entry name" value="Ribosomal_L6"/>
    <property type="match status" value="1"/>
</dbReference>
<dbReference type="SUPFAM" id="SSF56053">
    <property type="entry name" value="Ribosomal protein L6"/>
    <property type="match status" value="2"/>
</dbReference>
<dbReference type="PROSITE" id="PS00700">
    <property type="entry name" value="RIBOSOMAL_L6_2"/>
    <property type="match status" value="1"/>
</dbReference>
<name>RL9_TETTS</name>
<keyword id="KW-0002">3D-structure</keyword>
<keyword id="KW-1185">Reference proteome</keyword>
<keyword id="KW-0687">Ribonucleoprotein</keyword>
<keyword id="KW-0689">Ribosomal protein</keyword>
<accession>Q22AX5</accession>
<comment type="similarity">
    <text evidence="1">Belongs to the universal ribosomal protein uL6 family.</text>
</comment>
<feature type="chain" id="PRO_0000413495" description="Large ribosomal subunit protein uL6">
    <location>
        <begin position="1"/>
        <end position="188"/>
    </location>
</feature>
<reference key="1">
    <citation type="journal article" date="2006" name="PLoS Biol.">
        <title>Macronuclear genome sequence of the ciliate Tetrahymena thermophila, a model eukaryote.</title>
        <authorList>
            <person name="Eisen J.A."/>
            <person name="Coyne R.S."/>
            <person name="Wu M."/>
            <person name="Wu D."/>
            <person name="Thiagarajan M."/>
            <person name="Wortman J.R."/>
            <person name="Badger J.H."/>
            <person name="Ren Q."/>
            <person name="Amedeo P."/>
            <person name="Jones K.M."/>
            <person name="Tallon L.J."/>
            <person name="Delcher A.L."/>
            <person name="Salzberg S.L."/>
            <person name="Silva J.C."/>
            <person name="Haas B.J."/>
            <person name="Majoros W.H."/>
            <person name="Farzad M."/>
            <person name="Carlton J.M."/>
            <person name="Smith R.K. Jr."/>
            <person name="Garg J."/>
            <person name="Pearlman R.E."/>
            <person name="Karrer K.M."/>
            <person name="Sun L."/>
            <person name="Manning G."/>
            <person name="Elde N.C."/>
            <person name="Turkewitz A.P."/>
            <person name="Asai D.J."/>
            <person name="Wilkes D.E."/>
            <person name="Wang Y."/>
            <person name="Cai H."/>
            <person name="Collins K."/>
            <person name="Stewart B.A."/>
            <person name="Lee S.R."/>
            <person name="Wilamowska K."/>
            <person name="Weinberg Z."/>
            <person name="Ruzzo W.L."/>
            <person name="Wloga D."/>
            <person name="Gaertig J."/>
            <person name="Frankel J."/>
            <person name="Tsao C.-C."/>
            <person name="Gorovsky M.A."/>
            <person name="Keeling P.J."/>
            <person name="Waller R.F."/>
            <person name="Patron N.J."/>
            <person name="Cherry J.M."/>
            <person name="Stover N.A."/>
            <person name="Krieger C.J."/>
            <person name="del Toro C."/>
            <person name="Ryder H.F."/>
            <person name="Williamson S.C."/>
            <person name="Barbeau R.A."/>
            <person name="Hamilton E.P."/>
            <person name="Orias E."/>
        </authorList>
    </citation>
    <scope>NUCLEOTIDE SEQUENCE [LARGE SCALE GENOMIC DNA]</scope>
    <source>
        <strain>SB210</strain>
    </source>
</reference>